<dbReference type="EC" id="7.6.2.-" evidence="1"/>
<dbReference type="EMBL" id="BX571965">
    <property type="protein sequence ID" value="CAH36279.1"/>
    <property type="status" value="ALT_INIT"/>
    <property type="molecule type" value="Genomic_DNA"/>
</dbReference>
<dbReference type="RefSeq" id="WP_004195923.1">
    <property type="nucleotide sequence ID" value="NZ_CP009538.1"/>
</dbReference>
<dbReference type="RefSeq" id="YP_108872.1">
    <property type="nucleotide sequence ID" value="NC_006350.1"/>
</dbReference>
<dbReference type="SMR" id="Q63SP4"/>
<dbReference type="STRING" id="272560.BPSL2276"/>
<dbReference type="GeneID" id="93060833"/>
<dbReference type="KEGG" id="bps:BPSL2276"/>
<dbReference type="PATRIC" id="fig|272560.6.peg.2585"/>
<dbReference type="eggNOG" id="COG1136">
    <property type="taxonomic scope" value="Bacteria"/>
</dbReference>
<dbReference type="Proteomes" id="UP000000605">
    <property type="component" value="Chromosome 1"/>
</dbReference>
<dbReference type="GO" id="GO:0005886">
    <property type="term" value="C:plasma membrane"/>
    <property type="evidence" value="ECO:0007669"/>
    <property type="project" value="UniProtKB-SubCell"/>
</dbReference>
<dbReference type="GO" id="GO:0005524">
    <property type="term" value="F:ATP binding"/>
    <property type="evidence" value="ECO:0007669"/>
    <property type="project" value="UniProtKB-KW"/>
</dbReference>
<dbReference type="GO" id="GO:0016887">
    <property type="term" value="F:ATP hydrolysis activity"/>
    <property type="evidence" value="ECO:0007669"/>
    <property type="project" value="InterPro"/>
</dbReference>
<dbReference type="GO" id="GO:0022857">
    <property type="term" value="F:transmembrane transporter activity"/>
    <property type="evidence" value="ECO:0007669"/>
    <property type="project" value="TreeGrafter"/>
</dbReference>
<dbReference type="GO" id="GO:0044874">
    <property type="term" value="P:lipoprotein localization to outer membrane"/>
    <property type="evidence" value="ECO:0007669"/>
    <property type="project" value="TreeGrafter"/>
</dbReference>
<dbReference type="GO" id="GO:0089705">
    <property type="term" value="P:protein localization to outer membrane"/>
    <property type="evidence" value="ECO:0007669"/>
    <property type="project" value="TreeGrafter"/>
</dbReference>
<dbReference type="CDD" id="cd03255">
    <property type="entry name" value="ABC_MJ0796_LolCDE_FtsE"/>
    <property type="match status" value="1"/>
</dbReference>
<dbReference type="FunFam" id="3.40.50.300:FF:000230">
    <property type="entry name" value="Lipoprotein-releasing system ATP-binding protein LolD"/>
    <property type="match status" value="1"/>
</dbReference>
<dbReference type="Gene3D" id="3.40.50.300">
    <property type="entry name" value="P-loop containing nucleotide triphosphate hydrolases"/>
    <property type="match status" value="1"/>
</dbReference>
<dbReference type="InterPro" id="IPR003593">
    <property type="entry name" value="AAA+_ATPase"/>
</dbReference>
<dbReference type="InterPro" id="IPR003439">
    <property type="entry name" value="ABC_transporter-like_ATP-bd"/>
</dbReference>
<dbReference type="InterPro" id="IPR017871">
    <property type="entry name" value="ABC_transporter-like_CS"/>
</dbReference>
<dbReference type="InterPro" id="IPR015854">
    <property type="entry name" value="ABC_transpr_LolD-like"/>
</dbReference>
<dbReference type="InterPro" id="IPR011924">
    <property type="entry name" value="LolD_lipo_ATP-bd"/>
</dbReference>
<dbReference type="InterPro" id="IPR017911">
    <property type="entry name" value="MacB-like_ATP-bd"/>
</dbReference>
<dbReference type="InterPro" id="IPR027417">
    <property type="entry name" value="P-loop_NTPase"/>
</dbReference>
<dbReference type="NCBIfam" id="TIGR02211">
    <property type="entry name" value="LolD_lipo_ex"/>
    <property type="match status" value="1"/>
</dbReference>
<dbReference type="PANTHER" id="PTHR24220">
    <property type="entry name" value="IMPORT ATP-BINDING PROTEIN"/>
    <property type="match status" value="1"/>
</dbReference>
<dbReference type="PANTHER" id="PTHR24220:SF689">
    <property type="entry name" value="LIPOPROTEIN-RELEASING SYSTEM ATP-BINDING PROTEIN LOLD"/>
    <property type="match status" value="1"/>
</dbReference>
<dbReference type="Pfam" id="PF00005">
    <property type="entry name" value="ABC_tran"/>
    <property type="match status" value="1"/>
</dbReference>
<dbReference type="SMART" id="SM00382">
    <property type="entry name" value="AAA"/>
    <property type="match status" value="1"/>
</dbReference>
<dbReference type="SUPFAM" id="SSF52540">
    <property type="entry name" value="P-loop containing nucleoside triphosphate hydrolases"/>
    <property type="match status" value="1"/>
</dbReference>
<dbReference type="PROSITE" id="PS00211">
    <property type="entry name" value="ABC_TRANSPORTER_1"/>
    <property type="match status" value="1"/>
</dbReference>
<dbReference type="PROSITE" id="PS50893">
    <property type="entry name" value="ABC_TRANSPORTER_2"/>
    <property type="match status" value="1"/>
</dbReference>
<dbReference type="PROSITE" id="PS51244">
    <property type="entry name" value="LOLD"/>
    <property type="match status" value="1"/>
</dbReference>
<protein>
    <recommendedName>
        <fullName evidence="1">Lipoprotein-releasing system ATP-binding protein LolD</fullName>
        <ecNumber evidence="1">7.6.2.-</ecNumber>
    </recommendedName>
</protein>
<name>LOLD_BURPS</name>
<gene>
    <name evidence="1" type="primary">lolD</name>
    <name type="ordered locus">BPSL2276</name>
</gene>
<accession>Q63SP4</accession>
<sequence length="249" mass="27407">MNDRVFEQTMNQNHQDGGARECVLEARGVTKTFVQGGFNVQVLDNAQVSVRRGEKLAIVGASGSGKSTLLHVLGGLDEPSAGQVSLLGKPFTQLAERERNELRNRALGFVYQFHHLLPEFTALDNVAMPLRIRRMSTEEARRHAREMLEQVGLGARAKHRPGELSGGERQRVAIARALVTKPACVLADEPTGNLDGSTADHVFHLMLELSRTLDTSFVIVTHDPDLAARCDRILRLRDGVLHEEPAVPV</sequence>
<comment type="function">
    <text evidence="1">Part of the ABC transporter complex LolCDE involved in the translocation of mature outer membrane-directed lipoproteins, from the inner membrane to the periplasmic chaperone, LolA. Responsible for the formation of the LolA-lipoprotein complex in an ATP-dependent manner.</text>
</comment>
<comment type="subunit">
    <text evidence="1">The complex is composed of two ATP-binding proteins (LolD) and two transmembrane proteins (LolC and LolE).</text>
</comment>
<comment type="subcellular location">
    <subcellularLocation>
        <location evidence="1">Cell inner membrane</location>
        <topology evidence="1">Peripheral membrane protein</topology>
    </subcellularLocation>
</comment>
<comment type="similarity">
    <text evidence="1">Belongs to the ABC transporter superfamily. Lipoprotein translocase (TC 3.A.1.125) family.</text>
</comment>
<comment type="sequence caution" evidence="2">
    <conflict type="erroneous initiation">
        <sequence resource="EMBL-CDS" id="CAH36279"/>
    </conflict>
</comment>
<keyword id="KW-0067">ATP-binding</keyword>
<keyword id="KW-0997">Cell inner membrane</keyword>
<keyword id="KW-1003">Cell membrane</keyword>
<keyword id="KW-0472">Membrane</keyword>
<keyword id="KW-0547">Nucleotide-binding</keyword>
<keyword id="KW-1185">Reference proteome</keyword>
<keyword id="KW-1278">Translocase</keyword>
<keyword id="KW-0813">Transport</keyword>
<organism>
    <name type="scientific">Burkholderia pseudomallei (strain K96243)</name>
    <dbReference type="NCBI Taxonomy" id="272560"/>
    <lineage>
        <taxon>Bacteria</taxon>
        <taxon>Pseudomonadati</taxon>
        <taxon>Pseudomonadota</taxon>
        <taxon>Betaproteobacteria</taxon>
        <taxon>Burkholderiales</taxon>
        <taxon>Burkholderiaceae</taxon>
        <taxon>Burkholderia</taxon>
        <taxon>pseudomallei group</taxon>
    </lineage>
</organism>
<feature type="chain" id="PRO_0000272065" description="Lipoprotein-releasing system ATP-binding protein LolD">
    <location>
        <begin position="1"/>
        <end position="249"/>
    </location>
</feature>
<feature type="domain" description="ABC transporter" evidence="1">
    <location>
        <begin position="24"/>
        <end position="249"/>
    </location>
</feature>
<feature type="binding site" evidence="1">
    <location>
        <begin position="60"/>
        <end position="67"/>
    </location>
    <ligand>
        <name>ATP</name>
        <dbReference type="ChEBI" id="CHEBI:30616"/>
    </ligand>
</feature>
<evidence type="ECO:0000255" key="1">
    <source>
        <dbReference type="HAMAP-Rule" id="MF_01708"/>
    </source>
</evidence>
<evidence type="ECO:0000305" key="2"/>
<proteinExistence type="inferred from homology"/>
<reference key="1">
    <citation type="journal article" date="2004" name="Proc. Natl. Acad. Sci. U.S.A.">
        <title>Genomic plasticity of the causative agent of melioidosis, Burkholderia pseudomallei.</title>
        <authorList>
            <person name="Holden M.T.G."/>
            <person name="Titball R.W."/>
            <person name="Peacock S.J."/>
            <person name="Cerdeno-Tarraga A.-M."/>
            <person name="Atkins T."/>
            <person name="Crossman L.C."/>
            <person name="Pitt T."/>
            <person name="Churcher C."/>
            <person name="Mungall K.L."/>
            <person name="Bentley S.D."/>
            <person name="Sebaihia M."/>
            <person name="Thomson N.R."/>
            <person name="Bason N."/>
            <person name="Beacham I.R."/>
            <person name="Brooks K."/>
            <person name="Brown K.A."/>
            <person name="Brown N.F."/>
            <person name="Challis G.L."/>
            <person name="Cherevach I."/>
            <person name="Chillingworth T."/>
            <person name="Cronin A."/>
            <person name="Crossett B."/>
            <person name="Davis P."/>
            <person name="DeShazer D."/>
            <person name="Feltwell T."/>
            <person name="Fraser A."/>
            <person name="Hance Z."/>
            <person name="Hauser H."/>
            <person name="Holroyd S."/>
            <person name="Jagels K."/>
            <person name="Keith K.E."/>
            <person name="Maddison M."/>
            <person name="Moule S."/>
            <person name="Price C."/>
            <person name="Quail M.A."/>
            <person name="Rabbinowitsch E."/>
            <person name="Rutherford K."/>
            <person name="Sanders M."/>
            <person name="Simmonds M."/>
            <person name="Songsivilai S."/>
            <person name="Stevens K."/>
            <person name="Tumapa S."/>
            <person name="Vesaratchavest M."/>
            <person name="Whitehead S."/>
            <person name="Yeats C."/>
            <person name="Barrell B.G."/>
            <person name="Oyston P.C.F."/>
            <person name="Parkhill J."/>
        </authorList>
    </citation>
    <scope>NUCLEOTIDE SEQUENCE [LARGE SCALE GENOMIC DNA]</scope>
    <source>
        <strain>K96243</strain>
    </source>
</reference>